<evidence type="ECO:0000256" key="1">
    <source>
        <dbReference type="SAM" id="MobiDB-lite"/>
    </source>
</evidence>
<evidence type="ECO:0000269" key="2">
    <source>
    </source>
</evidence>
<evidence type="ECO:0000303" key="3">
    <source>
    </source>
</evidence>
<evidence type="ECO:0000305" key="4"/>
<evidence type="ECO:0000312" key="5">
    <source>
        <dbReference type="Proteomes" id="UP000001940"/>
    </source>
</evidence>
<evidence type="ECO:0000312" key="6">
    <source>
        <dbReference type="WormBase" id="T01C3.9"/>
    </source>
</evidence>
<feature type="chain" id="PRO_0000441622" description="Protein hrde-2" evidence="4">
    <location>
        <begin position="1"/>
        <end position="305"/>
    </location>
</feature>
<feature type="region of interest" description="Disordered" evidence="1">
    <location>
        <begin position="211"/>
        <end position="233"/>
    </location>
</feature>
<feature type="region of interest" description="Disordered" evidence="1">
    <location>
        <begin position="267"/>
        <end position="305"/>
    </location>
</feature>
<feature type="compositionally biased region" description="Polar residues" evidence="1">
    <location>
        <begin position="215"/>
        <end position="227"/>
    </location>
</feature>
<feature type="compositionally biased region" description="Acidic residues" evidence="1">
    <location>
        <begin position="268"/>
        <end position="287"/>
    </location>
</feature>
<feature type="compositionally biased region" description="Basic and acidic residues" evidence="1">
    <location>
        <begin position="289"/>
        <end position="305"/>
    </location>
</feature>
<comment type="function">
    <text evidence="2">Plays a role in germline RNA interference (RNAi), and in particular is required for piwi-interacting RNA (piRNA) gene silencing. Facilitates the binding of the argonaut protein hrde-1 to small interfering RNAs (siRNAs) targets that are required for transgenerational epigenetic inheritance and germline immortality.</text>
</comment>
<comment type="subcellular location">
    <subcellularLocation>
        <location evidence="2">Nucleus</location>
    </subcellularLocation>
</comment>
<comment type="tissue specificity">
    <text evidence="2">Expressed throughout the male and female germline.</text>
</comment>
<comment type="disruption phenotype">
    <text evidence="2">Mortal germline (Mrt) phenotype in which there is a progressive decline in fertility with each generation at 25 degrees Celsius, and after 2 to 3 generations the brood size is 25% that of wild-type counterparts. Fertility in these mutants may be restored when transferred to a 20 degrees Celsius environment. Defective RNAi inheritance.</text>
</comment>
<organism evidence="5">
    <name type="scientific">Caenorhabditis elegans</name>
    <dbReference type="NCBI Taxonomy" id="6239"/>
    <lineage>
        <taxon>Eukaryota</taxon>
        <taxon>Metazoa</taxon>
        <taxon>Ecdysozoa</taxon>
        <taxon>Nematoda</taxon>
        <taxon>Chromadorea</taxon>
        <taxon>Rhabditida</taxon>
        <taxon>Rhabditina</taxon>
        <taxon>Rhabditomorpha</taxon>
        <taxon>Rhabditoidea</taxon>
        <taxon>Rhabditidae</taxon>
        <taxon>Peloderinae</taxon>
        <taxon>Caenorhabditis</taxon>
    </lineage>
</organism>
<proteinExistence type="evidence at transcript level"/>
<reference evidence="5" key="1">
    <citation type="journal article" date="1998" name="Science">
        <title>Genome sequence of the nematode C. elegans: a platform for investigating biology.</title>
        <authorList>
            <consortium name="The C. elegans sequencing consortium"/>
        </authorList>
    </citation>
    <scope>NUCLEOTIDE SEQUENCE [LARGE SCALE GENOMIC DNA]</scope>
    <source>
        <strain evidence="5">Bristol N2</strain>
    </source>
</reference>
<reference evidence="4" key="2">
    <citation type="journal article" date="2017" name="Genetics">
        <title>Identification and characterization of Caenorhabditis elegans RNAi inheritance machinery.</title>
        <authorList>
            <person name="Spracklin G."/>
            <person name="Fields B."/>
            <person name="Wan G."/>
            <person name="Vijayendran D."/>
            <person name="Wallig A."/>
            <person name="Shukla A."/>
            <person name="Kennedy S."/>
        </authorList>
    </citation>
    <scope>FUNCTION</scope>
    <scope>SUBCELLULAR LOCATION</scope>
    <scope>TISSUE SPECIFICITY</scope>
    <scope>DISRUPTION PHENOTYPE</scope>
</reference>
<dbReference type="EMBL" id="BX284605">
    <property type="protein sequence ID" value="CAB01662.1"/>
    <property type="molecule type" value="Genomic_DNA"/>
</dbReference>
<dbReference type="PIR" id="T24283">
    <property type="entry name" value="T24283"/>
</dbReference>
<dbReference type="RefSeq" id="NP_506693.1">
    <property type="nucleotide sequence ID" value="NM_074292.6"/>
</dbReference>
<dbReference type="SMR" id="Q22058"/>
<dbReference type="FunCoup" id="Q22058">
    <property type="interactions" value="281"/>
</dbReference>
<dbReference type="IntAct" id="Q22058">
    <property type="interactions" value="1"/>
</dbReference>
<dbReference type="STRING" id="6239.T01C3.9.1"/>
<dbReference type="PaxDb" id="6239-T01C3.9"/>
<dbReference type="EnsemblMetazoa" id="T01C3.9.1">
    <property type="protein sequence ID" value="T01C3.9.1"/>
    <property type="gene ID" value="WBGene00011324"/>
</dbReference>
<dbReference type="GeneID" id="180001"/>
<dbReference type="KEGG" id="cel:CELE_T01C3.9"/>
<dbReference type="UCSC" id="T01C3.9">
    <property type="organism name" value="c. elegans"/>
</dbReference>
<dbReference type="AGR" id="WB:WBGene00011324"/>
<dbReference type="CTD" id="180001"/>
<dbReference type="WormBase" id="T01C3.9">
    <property type="protein sequence ID" value="CE12924"/>
    <property type="gene ID" value="WBGene00011324"/>
    <property type="gene designation" value="hrde-2"/>
</dbReference>
<dbReference type="eggNOG" id="ENOG502TIP7">
    <property type="taxonomic scope" value="Eukaryota"/>
</dbReference>
<dbReference type="HOGENOM" id="CLU_855898_0_0_1"/>
<dbReference type="InParanoid" id="Q22058"/>
<dbReference type="OMA" id="DEGHEYC"/>
<dbReference type="OrthoDB" id="10330195at2759"/>
<dbReference type="PRO" id="PR:Q22058"/>
<dbReference type="Proteomes" id="UP000001940">
    <property type="component" value="Chromosome V"/>
</dbReference>
<dbReference type="Bgee" id="WBGene00011324">
    <property type="expression patterns" value="Expressed in germ line (C elegans) and 4 other cell types or tissues"/>
</dbReference>
<dbReference type="GO" id="GO:0005634">
    <property type="term" value="C:nucleus"/>
    <property type="evidence" value="ECO:0007669"/>
    <property type="project" value="UniProtKB-SubCell"/>
</dbReference>
<dbReference type="GO" id="GO:0031047">
    <property type="term" value="P:regulatory ncRNA-mediated gene silencing"/>
    <property type="evidence" value="ECO:0007669"/>
    <property type="project" value="UniProtKB-KW"/>
</dbReference>
<protein>
    <recommendedName>
        <fullName evidence="4">Protein hrde-2</fullName>
    </recommendedName>
    <alternativeName>
        <fullName evidence="6">Heritable RNAi deficient protein 2</fullName>
    </alternativeName>
</protein>
<name>HRDE2_CAEEL</name>
<keyword id="KW-0539">Nucleus</keyword>
<keyword id="KW-1185">Reference proteome</keyword>
<keyword id="KW-0943">RNA-mediated gene silencing</keyword>
<accession>Q22058</accession>
<sequence>MSQNSDTFDSGLQMEVHKMAEADNSSVQQKFDAIRDYIGRKETTIILCEHDDSRKIKLTLNKQRMESSMFLTEMPDGGIQEKTKFHRNGLAVCSYNAFDEVDLPLADSYIFYGLPSNVEAFPRMLHGIEKSAHKENKIVFIDIVVSILEKIQIKVVSFELYNRKCTVPTWVAELVITYCAPIEEQQQRIEEIRRTRASVPVAISDAANGSAEMVPSNTTGSSGSPMSTAPVPAAKKEKVQYESIRQIRPNAQGRYFVPARMINMDIEMSNDEYSPDESENDENEYDYENAARYDDGYDEGHEYCQ</sequence>
<gene>
    <name evidence="3" type="primary">hrde-2</name>
    <name evidence="6" type="ORF">T01C3.9</name>
</gene>